<gene>
    <name evidence="1" type="primary">add</name>
    <name type="ordered locus">CLM_1145</name>
</gene>
<protein>
    <recommendedName>
        <fullName evidence="1">Adenosine deaminase</fullName>
        <ecNumber evidence="1">3.5.4.4</ecNumber>
    </recommendedName>
    <alternativeName>
        <fullName evidence="1">Adenosine aminohydrolase</fullName>
    </alternativeName>
</protein>
<proteinExistence type="inferred from homology"/>
<reference key="1">
    <citation type="submission" date="2008-10" db="EMBL/GenBank/DDBJ databases">
        <title>Genome sequence of Clostridium botulinum A2 Kyoto.</title>
        <authorList>
            <person name="Shrivastava S."/>
            <person name="Brinkac L.M."/>
            <person name="Brown J.L."/>
            <person name="Bruce D."/>
            <person name="Detter C.C."/>
            <person name="Johnson E.A."/>
            <person name="Munk C.A."/>
            <person name="Smith L.A."/>
            <person name="Smith T.J."/>
            <person name="Sutton G."/>
            <person name="Brettin T.S."/>
        </authorList>
    </citation>
    <scope>NUCLEOTIDE SEQUENCE [LARGE SCALE GENOMIC DNA]</scope>
    <source>
        <strain>Kyoto / Type A2</strain>
    </source>
</reference>
<name>ADD_CLOBJ</name>
<comment type="function">
    <text evidence="1">Catalyzes the hydrolytic deamination of adenosine and 2-deoxyadenosine.</text>
</comment>
<comment type="catalytic activity">
    <reaction evidence="1">
        <text>adenosine + H2O + H(+) = inosine + NH4(+)</text>
        <dbReference type="Rhea" id="RHEA:24408"/>
        <dbReference type="ChEBI" id="CHEBI:15377"/>
        <dbReference type="ChEBI" id="CHEBI:15378"/>
        <dbReference type="ChEBI" id="CHEBI:16335"/>
        <dbReference type="ChEBI" id="CHEBI:17596"/>
        <dbReference type="ChEBI" id="CHEBI:28938"/>
        <dbReference type="EC" id="3.5.4.4"/>
    </reaction>
    <physiologicalReaction direction="left-to-right" evidence="1">
        <dbReference type="Rhea" id="RHEA:24409"/>
    </physiologicalReaction>
</comment>
<comment type="catalytic activity">
    <reaction evidence="1">
        <text>2'-deoxyadenosine + H2O + H(+) = 2'-deoxyinosine + NH4(+)</text>
        <dbReference type="Rhea" id="RHEA:28190"/>
        <dbReference type="ChEBI" id="CHEBI:15377"/>
        <dbReference type="ChEBI" id="CHEBI:15378"/>
        <dbReference type="ChEBI" id="CHEBI:17256"/>
        <dbReference type="ChEBI" id="CHEBI:28938"/>
        <dbReference type="ChEBI" id="CHEBI:28997"/>
        <dbReference type="EC" id="3.5.4.4"/>
    </reaction>
    <physiologicalReaction direction="left-to-right" evidence="1">
        <dbReference type="Rhea" id="RHEA:28191"/>
    </physiologicalReaction>
</comment>
<comment type="cofactor">
    <cofactor evidence="1">
        <name>Zn(2+)</name>
        <dbReference type="ChEBI" id="CHEBI:29105"/>
    </cofactor>
    <text evidence="1">Binds 1 zinc ion per subunit.</text>
</comment>
<comment type="similarity">
    <text evidence="1">Belongs to the metallo-dependent hydrolases superfamily. Adenosine and AMP deaminases family. Adenosine deaminase subfamily.</text>
</comment>
<evidence type="ECO:0000255" key="1">
    <source>
        <dbReference type="HAMAP-Rule" id="MF_00540"/>
    </source>
</evidence>
<dbReference type="EC" id="3.5.4.4" evidence="1"/>
<dbReference type="EMBL" id="CP001581">
    <property type="protein sequence ID" value="ACO84642.1"/>
    <property type="molecule type" value="Genomic_DNA"/>
</dbReference>
<dbReference type="RefSeq" id="WP_012704336.1">
    <property type="nucleotide sequence ID" value="NC_012563.1"/>
</dbReference>
<dbReference type="SMR" id="C1FVJ1"/>
<dbReference type="KEGG" id="cby:CLM_1145"/>
<dbReference type="eggNOG" id="COG1816">
    <property type="taxonomic scope" value="Bacteria"/>
</dbReference>
<dbReference type="HOGENOM" id="CLU_039228_0_0_9"/>
<dbReference type="Proteomes" id="UP000001374">
    <property type="component" value="Chromosome"/>
</dbReference>
<dbReference type="GO" id="GO:0005829">
    <property type="term" value="C:cytosol"/>
    <property type="evidence" value="ECO:0007669"/>
    <property type="project" value="TreeGrafter"/>
</dbReference>
<dbReference type="GO" id="GO:0046936">
    <property type="term" value="F:2'-deoxyadenosine deaminase activity"/>
    <property type="evidence" value="ECO:0007669"/>
    <property type="project" value="RHEA"/>
</dbReference>
<dbReference type="GO" id="GO:0004000">
    <property type="term" value="F:adenosine deaminase activity"/>
    <property type="evidence" value="ECO:0007669"/>
    <property type="project" value="UniProtKB-UniRule"/>
</dbReference>
<dbReference type="GO" id="GO:0008270">
    <property type="term" value="F:zinc ion binding"/>
    <property type="evidence" value="ECO:0007669"/>
    <property type="project" value="UniProtKB-UniRule"/>
</dbReference>
<dbReference type="GO" id="GO:0006154">
    <property type="term" value="P:adenosine catabolic process"/>
    <property type="evidence" value="ECO:0007669"/>
    <property type="project" value="TreeGrafter"/>
</dbReference>
<dbReference type="GO" id="GO:0043103">
    <property type="term" value="P:hypoxanthine salvage"/>
    <property type="evidence" value="ECO:0007669"/>
    <property type="project" value="TreeGrafter"/>
</dbReference>
<dbReference type="GO" id="GO:0046103">
    <property type="term" value="P:inosine biosynthetic process"/>
    <property type="evidence" value="ECO:0007669"/>
    <property type="project" value="TreeGrafter"/>
</dbReference>
<dbReference type="GO" id="GO:0009117">
    <property type="term" value="P:nucleotide metabolic process"/>
    <property type="evidence" value="ECO:0007669"/>
    <property type="project" value="UniProtKB-KW"/>
</dbReference>
<dbReference type="GO" id="GO:0009168">
    <property type="term" value="P:purine ribonucleoside monophosphate biosynthetic process"/>
    <property type="evidence" value="ECO:0007669"/>
    <property type="project" value="UniProtKB-UniRule"/>
</dbReference>
<dbReference type="CDD" id="cd01320">
    <property type="entry name" value="ADA"/>
    <property type="match status" value="1"/>
</dbReference>
<dbReference type="FunFam" id="3.20.20.140:FF:000093">
    <property type="entry name" value="Adenosine deaminase"/>
    <property type="match status" value="1"/>
</dbReference>
<dbReference type="Gene3D" id="3.20.20.140">
    <property type="entry name" value="Metal-dependent hydrolases"/>
    <property type="match status" value="1"/>
</dbReference>
<dbReference type="HAMAP" id="MF_00540">
    <property type="entry name" value="A_deaminase"/>
    <property type="match status" value="1"/>
</dbReference>
<dbReference type="InterPro" id="IPR028893">
    <property type="entry name" value="A_deaminase"/>
</dbReference>
<dbReference type="InterPro" id="IPR001365">
    <property type="entry name" value="A_deaminase_dom"/>
</dbReference>
<dbReference type="InterPro" id="IPR006330">
    <property type="entry name" value="Ado/ade_deaminase"/>
</dbReference>
<dbReference type="InterPro" id="IPR032466">
    <property type="entry name" value="Metal_Hydrolase"/>
</dbReference>
<dbReference type="NCBIfam" id="TIGR01430">
    <property type="entry name" value="aden_deam"/>
    <property type="match status" value="1"/>
</dbReference>
<dbReference type="PANTHER" id="PTHR11409">
    <property type="entry name" value="ADENOSINE DEAMINASE"/>
    <property type="match status" value="1"/>
</dbReference>
<dbReference type="PANTHER" id="PTHR11409:SF43">
    <property type="entry name" value="ADENOSINE DEAMINASE"/>
    <property type="match status" value="1"/>
</dbReference>
<dbReference type="Pfam" id="PF00962">
    <property type="entry name" value="A_deaminase"/>
    <property type="match status" value="1"/>
</dbReference>
<dbReference type="SUPFAM" id="SSF51556">
    <property type="entry name" value="Metallo-dependent hydrolases"/>
    <property type="match status" value="1"/>
</dbReference>
<sequence>MNFKKLPKIELHCHLDGSLRVDTILDIAKKDNIPLPSYNKKELINYVSIMDDCNSLDEYLNKFFIPNKVMQTKENLKRIAFELLEDVAADNVKYIEVRFAPLLHVEKGLNIEEIIESVLEGIKEAEKLYDIKGNLILGCMRNMDIPSAFEVVKKGSKFIGKGVVAIDLCAGEEPHFPGKYIEVLKLAKECGYRITIHAGEAGVGENVLEAITLLNAERIGHGIYIKNCAEAYKLVKEKNIPLEVCPTSNLHTKAFESYETHPFMDFLKDGIKVTINTDNMTVSNTTITKELEMLNKFCGLSIEDYKILYLNAVEASFASPETKEILKSYANEITA</sequence>
<feature type="chain" id="PRO_1000146567" description="Adenosine deaminase">
    <location>
        <begin position="1"/>
        <end position="335"/>
    </location>
</feature>
<feature type="active site" description="Proton donor" evidence="1">
    <location>
        <position position="200"/>
    </location>
</feature>
<feature type="binding site" evidence="1">
    <location>
        <position position="12"/>
    </location>
    <ligand>
        <name>Zn(2+)</name>
        <dbReference type="ChEBI" id="CHEBI:29105"/>
        <note>catalytic</note>
    </ligand>
</feature>
<feature type="binding site" evidence="1">
    <location>
        <position position="14"/>
    </location>
    <ligand>
        <name>substrate</name>
    </ligand>
</feature>
<feature type="binding site" evidence="1">
    <location>
        <position position="14"/>
    </location>
    <ligand>
        <name>Zn(2+)</name>
        <dbReference type="ChEBI" id="CHEBI:29105"/>
        <note>catalytic</note>
    </ligand>
</feature>
<feature type="binding site" evidence="1">
    <location>
        <position position="16"/>
    </location>
    <ligand>
        <name>substrate</name>
    </ligand>
</feature>
<feature type="binding site" evidence="1">
    <location>
        <position position="197"/>
    </location>
    <ligand>
        <name>Zn(2+)</name>
        <dbReference type="ChEBI" id="CHEBI:29105"/>
        <note>catalytic</note>
    </ligand>
</feature>
<feature type="binding site" evidence="1">
    <location>
        <position position="278"/>
    </location>
    <ligand>
        <name>Zn(2+)</name>
        <dbReference type="ChEBI" id="CHEBI:29105"/>
        <note>catalytic</note>
    </ligand>
</feature>
<feature type="site" description="Important for catalytic activity" evidence="1">
    <location>
        <position position="221"/>
    </location>
</feature>
<keyword id="KW-0378">Hydrolase</keyword>
<keyword id="KW-0479">Metal-binding</keyword>
<keyword id="KW-0546">Nucleotide metabolism</keyword>
<keyword id="KW-0862">Zinc</keyword>
<accession>C1FVJ1</accession>
<organism>
    <name type="scientific">Clostridium botulinum (strain Kyoto / Type A2)</name>
    <dbReference type="NCBI Taxonomy" id="536232"/>
    <lineage>
        <taxon>Bacteria</taxon>
        <taxon>Bacillati</taxon>
        <taxon>Bacillota</taxon>
        <taxon>Clostridia</taxon>
        <taxon>Eubacteriales</taxon>
        <taxon>Clostridiaceae</taxon>
        <taxon>Clostridium</taxon>
    </lineage>
</organism>